<keyword id="KW-1185">Reference proteome</keyword>
<gene>
    <name type="ordered locus">RCAP_rcc01784</name>
</gene>
<accession>P29962</accession>
<accession>D5AU90</accession>
<proteinExistence type="predicted"/>
<organism>
    <name type="scientific">Rhodobacter capsulatus (strain ATCC BAA-309 / NBRC 16581 / SB1003)</name>
    <dbReference type="NCBI Taxonomy" id="272942"/>
    <lineage>
        <taxon>Bacteria</taxon>
        <taxon>Pseudomonadati</taxon>
        <taxon>Pseudomonadota</taxon>
        <taxon>Alphaproteobacteria</taxon>
        <taxon>Rhodobacterales</taxon>
        <taxon>Rhodobacter group</taxon>
        <taxon>Rhodobacter</taxon>
    </lineage>
</organism>
<reference key="1">
    <citation type="journal article" date="1992" name="Genes Dev.">
        <title>Bacterial cytochromes c biogenesis.</title>
        <authorList>
            <person name="Beckman D.L."/>
            <person name="Trawick D.R."/>
            <person name="Kranz R.G."/>
        </authorList>
    </citation>
    <scope>NUCLEOTIDE SEQUENCE [GENOMIC DNA]</scope>
    <source>
        <strain>ATCC BAA-309 / NBRC 16581 / SB1003</strain>
    </source>
</reference>
<reference key="2">
    <citation type="journal article" date="2010" name="J. Bacteriol.">
        <title>Complete genome sequence of the photosynthetic purple nonsulfur bacterium Rhodobacter capsulatus SB 1003.</title>
        <authorList>
            <person name="Strnad H."/>
            <person name="Lapidus A."/>
            <person name="Paces J."/>
            <person name="Ulbrich P."/>
            <person name="Vlcek C."/>
            <person name="Paces V."/>
            <person name="Haselkorn R."/>
        </authorList>
    </citation>
    <scope>NUCLEOTIDE SEQUENCE [LARGE SCALE GENOMIC DNA]</scope>
    <source>
        <strain>ATCC BAA-309 / NBRC 16581 / SB1003</strain>
    </source>
</reference>
<feature type="chain" id="PRO_0000066251" description="Uncharacterized protein RCAP_rcc01784">
    <location>
        <begin position="1"/>
        <end position="124"/>
    </location>
</feature>
<name>Y1784_RHOCB</name>
<protein>
    <recommendedName>
        <fullName>Uncharacterized protein RCAP_rcc01784</fullName>
    </recommendedName>
    <alternativeName>
        <fullName>ORF124</fullName>
    </alternativeName>
</protein>
<comment type="function">
    <text>Not required for the biogenesis of c-type cytochromes.</text>
</comment>
<sequence>MAPREPGFAGALPIDGYGPGFFRIAGAVHRGGLLIHAEAAMPWTGFDDLAALRALAGQVDLLLCGMGADIAHLPKGLQVELEALGVMAEPMSTASAARHYNVLLSEGRRVGAALLPMPGAVPTA</sequence>
<dbReference type="EMBL" id="X63462">
    <property type="protein sequence ID" value="CAA45060.1"/>
    <property type="molecule type" value="Genomic_DNA"/>
</dbReference>
<dbReference type="EMBL" id="CP001312">
    <property type="protein sequence ID" value="ADE85529.1"/>
    <property type="molecule type" value="Genomic_DNA"/>
</dbReference>
<dbReference type="PIR" id="S23662">
    <property type="entry name" value="S23662"/>
</dbReference>
<dbReference type="RefSeq" id="WP_013067508.1">
    <property type="nucleotide sequence ID" value="NC_014034.1"/>
</dbReference>
<dbReference type="SMR" id="P29962"/>
<dbReference type="STRING" id="272942.RCAP_rcc01784"/>
<dbReference type="GeneID" id="31490659"/>
<dbReference type="KEGG" id="rcp:RCAP_rcc01784"/>
<dbReference type="eggNOG" id="COG3737">
    <property type="taxonomic scope" value="Bacteria"/>
</dbReference>
<dbReference type="HOGENOM" id="CLU_074390_2_1_5"/>
<dbReference type="OrthoDB" id="7351393at2"/>
<dbReference type="Proteomes" id="UP000002361">
    <property type="component" value="Chromosome"/>
</dbReference>
<dbReference type="CDD" id="cd00248">
    <property type="entry name" value="Mth938-like"/>
    <property type="match status" value="1"/>
</dbReference>
<dbReference type="Gene3D" id="3.40.1230.10">
    <property type="entry name" value="MTH938-like"/>
    <property type="match status" value="1"/>
</dbReference>
<dbReference type="InterPro" id="IPR036748">
    <property type="entry name" value="MTH938-like_sf"/>
</dbReference>
<dbReference type="InterPro" id="IPR007523">
    <property type="entry name" value="NDUFAF3/AAMDC"/>
</dbReference>
<dbReference type="PANTHER" id="PTHR21192:SF2">
    <property type="entry name" value="NADH DEHYDROGENASE [UBIQUINONE] 1 ALPHA SUBCOMPLEX ASSEMBLY FACTOR 3"/>
    <property type="match status" value="1"/>
</dbReference>
<dbReference type="PANTHER" id="PTHR21192">
    <property type="entry name" value="NUCLEAR PROTEIN E3-3"/>
    <property type="match status" value="1"/>
</dbReference>
<dbReference type="Pfam" id="PF04430">
    <property type="entry name" value="DUF498"/>
    <property type="match status" value="1"/>
</dbReference>
<dbReference type="SUPFAM" id="SSF64076">
    <property type="entry name" value="MTH938-like"/>
    <property type="match status" value="1"/>
</dbReference>